<reference key="1">
    <citation type="submission" date="2005-11" db="EMBL/GenBank/DDBJ databases">
        <authorList>
            <consortium name="NIH - Mammalian Gene Collection (MGC) project"/>
        </authorList>
    </citation>
    <scope>NUCLEOTIDE SEQUENCE [LARGE SCALE MRNA]</scope>
    <source>
        <strain>Crossbred X Angus</strain>
        <tissue>Liver</tissue>
    </source>
</reference>
<gene>
    <name type="primary">TMCO5B</name>
</gene>
<proteinExistence type="evidence at transcript level"/>
<keyword id="KW-0175">Coiled coil</keyword>
<keyword id="KW-0472">Membrane</keyword>
<keyword id="KW-1185">Reference proteome</keyword>
<keyword id="KW-0812">Transmembrane</keyword>
<keyword id="KW-1133">Transmembrane helix</keyword>
<accession>Q32L59</accession>
<sequence>MEEAGQDPLDDVRDVMEIPKLEITKQNLDSLNSDLEKDLQRMDEANQVLLKKIQEKEETIQSLERDITLSVRQAREREELDHRTAEKEAALRDLELETAKLEKNKEILSRSVVEVQKEISRKFKNVSLDKEALKQMLAELKVKLQKSTESCASQEKELVKIESDYQSVYQLCEDQAHYIKKYQEILRQMEKEKEMLLLEKEVQRWRSSIQSAKTRPGADCGSDHELLIAKFRLKLKKVGKTTRPFRCKAQNNATQIVKPGSTLVETIQSNMEKTIVKKQKRIFWYRHFRYFIFVVMIFFRLLGYVLFYLQYINPDLLVDALPMVMSRETLTRLRDALFPFLTLEVEEVLPH</sequence>
<comment type="subcellular location">
    <subcellularLocation>
        <location evidence="2">Membrane</location>
        <topology evidence="2">Single-pass membrane protein</topology>
    </subcellularLocation>
</comment>
<comment type="similarity">
    <text evidence="2">Belongs to the TMCO5 family.</text>
</comment>
<protein>
    <recommendedName>
        <fullName>Transmembrane and coiled-coil domain-containing protein 5B</fullName>
    </recommendedName>
</protein>
<organism>
    <name type="scientific">Bos taurus</name>
    <name type="common">Bovine</name>
    <dbReference type="NCBI Taxonomy" id="9913"/>
    <lineage>
        <taxon>Eukaryota</taxon>
        <taxon>Metazoa</taxon>
        <taxon>Chordata</taxon>
        <taxon>Craniata</taxon>
        <taxon>Vertebrata</taxon>
        <taxon>Euteleostomi</taxon>
        <taxon>Mammalia</taxon>
        <taxon>Eutheria</taxon>
        <taxon>Laurasiatheria</taxon>
        <taxon>Artiodactyla</taxon>
        <taxon>Ruminantia</taxon>
        <taxon>Pecora</taxon>
        <taxon>Bovidae</taxon>
        <taxon>Bovinae</taxon>
        <taxon>Bos</taxon>
    </lineage>
</organism>
<evidence type="ECO:0000255" key="1"/>
<evidence type="ECO:0000305" key="2"/>
<name>TMC5B_BOVIN</name>
<dbReference type="EMBL" id="BC109751">
    <property type="protein sequence ID" value="AAI09752.1"/>
    <property type="molecule type" value="mRNA"/>
</dbReference>
<dbReference type="RefSeq" id="NP_001069077.1">
    <property type="nucleotide sequence ID" value="NM_001075609.2"/>
</dbReference>
<dbReference type="SMR" id="Q32L59"/>
<dbReference type="STRING" id="9913.ENSBTAP00000028547"/>
<dbReference type="PaxDb" id="9913-ENSBTAP00000028547"/>
<dbReference type="GeneID" id="513290"/>
<dbReference type="KEGG" id="bta:513290"/>
<dbReference type="CTD" id="100652857"/>
<dbReference type="eggNOG" id="ENOG502SXU7">
    <property type="taxonomic scope" value="Eukaryota"/>
</dbReference>
<dbReference type="InParanoid" id="Q32L59"/>
<dbReference type="OrthoDB" id="9450739at2759"/>
<dbReference type="Proteomes" id="UP000009136">
    <property type="component" value="Unplaced"/>
</dbReference>
<dbReference type="GO" id="GO:0016020">
    <property type="term" value="C:membrane"/>
    <property type="evidence" value="ECO:0007669"/>
    <property type="project" value="UniProtKB-SubCell"/>
</dbReference>
<dbReference type="InterPro" id="IPR026617">
    <property type="entry name" value="SMCO2/5"/>
</dbReference>
<dbReference type="PANTHER" id="PTHR22422:SF1">
    <property type="entry name" value="TRANSMEMBRANE AND COILED-COIL DOMAIN-CONTAINING PROTEIN 5B"/>
    <property type="match status" value="1"/>
</dbReference>
<dbReference type="PANTHER" id="PTHR22422">
    <property type="entry name" value="TRANSMEMBRANE AND COILED-COIL DOMAIN-CONTAINING PROTEIN 5B-RELATED"/>
    <property type="match status" value="1"/>
</dbReference>
<dbReference type="Pfam" id="PF14992">
    <property type="entry name" value="TMCO5"/>
    <property type="match status" value="2"/>
</dbReference>
<feature type="chain" id="PRO_0000305155" description="Transmembrane and coiled-coil domain-containing protein 5B">
    <location>
        <begin position="1"/>
        <end position="351"/>
    </location>
</feature>
<feature type="transmembrane region" description="Helical" evidence="1">
    <location>
        <begin position="292"/>
        <end position="312"/>
    </location>
</feature>
<feature type="coiled-coil region" evidence="1">
    <location>
        <begin position="17"/>
        <end position="214"/>
    </location>
</feature>